<proteinExistence type="inferred from homology"/>
<protein>
    <recommendedName>
        <fullName>Elongator complex protein 2</fullName>
        <shortName>ELP2</shortName>
    </recommendedName>
</protein>
<organism>
    <name type="scientific">Dictyostelium discoideum</name>
    <name type="common">Social amoeba</name>
    <dbReference type="NCBI Taxonomy" id="44689"/>
    <lineage>
        <taxon>Eukaryota</taxon>
        <taxon>Amoebozoa</taxon>
        <taxon>Evosea</taxon>
        <taxon>Eumycetozoa</taxon>
        <taxon>Dictyostelia</taxon>
        <taxon>Dictyosteliales</taxon>
        <taxon>Dictyosteliaceae</taxon>
        <taxon>Dictyostelium</taxon>
    </lineage>
</organism>
<sequence length="901" mass="100804">MNVSSDVDFISVGCNCLGDCLVWGQNKLAAYGAQNFIALFDPIQSKVLATLPGHKDRVNHICWVPNINEEYKNRYSSYENELLSCSSDNTIISWKQIKGGLNYQYKVVEVLKGHSDSVTNISVLDFPDGSLLMCSTSADNTVKLWRRESLTKENIDTDTLPKWECIQTIDFTPKCMECSSLAFIPGTTIPLLAVGGLEPKIHIYIQNLDSTTATLQFKKLMSLQGHQDWIRSLSFKTINEGEGEGEEEELILASSSQDFKIRLWKISKFTAEKQKQQQLDESGNGGANLLGSLSTQLSGVTSLSTKGYLFNCNSVKYIILLDAVLSGHDDWVYSIHWSPARRDQETGKKIQEQMLISASMDKTAIVWRPDRTTGIWIDESRVGDMGGNILGQYGAVFSPCSQYILSHGYNGAFHFWKQNTNQKSSFWEPQIVVSGHFGPVQDLMWSPDYSYFISCSTDRTLRLFSEWKRNNNNNNLENNKEQQIISWNEIARPQIHGYDLECFTFINKKTHVIVSGAEEKIMRAFVGSQNFVDTLLNISKVQPVNDGTQRPLAANQPSLGLSNKPYFTGGSDYNENIDNNNNNNNNNGNGEENTEDSIKMKMGGGDEGGGGEGMDTGYFEDEIPFNPEVLSEPPFEEHLLQSSLWPEIHKFYGHGNEIVAVACSADGMYLASTCRASSADQATVRIWNVSNWKECANLKGHTLTVVNLSFSHNSKYLLGVSRDRMWTLWERSASNSEEPFVKVISAPKSHGRIIWSGSWSHDDKFFATGARDKLVKVWNLDNIKDIKNACASTLPAFGSGVTCVEFAPKSSKFTGEHGDHLLAVGEDDGKITIWKSTTSTSNPKSLDWTCVHTISPLISHTLDVRRIRWRDTPTINGNSLTYQIVTCSVDHSVRIFNIKFD</sequence>
<gene>
    <name type="primary">elp2</name>
    <name type="ORF">DDB_G0275651</name>
</gene>
<keyword id="KW-0963">Cytoplasm</keyword>
<keyword id="KW-0539">Nucleus</keyword>
<keyword id="KW-1185">Reference proteome</keyword>
<keyword id="KW-0677">Repeat</keyword>
<keyword id="KW-0819">tRNA processing</keyword>
<keyword id="KW-0853">WD repeat</keyword>
<dbReference type="EMBL" id="AAFI02000013">
    <property type="protein sequence ID" value="EAL69576.1"/>
    <property type="molecule type" value="Genomic_DNA"/>
</dbReference>
<dbReference type="RefSeq" id="XP_643531.1">
    <property type="nucleotide sequence ID" value="XM_638439.1"/>
</dbReference>
<dbReference type="SMR" id="Q86H45"/>
<dbReference type="FunCoup" id="Q86H45">
    <property type="interactions" value="507"/>
</dbReference>
<dbReference type="STRING" id="44689.Q86H45"/>
<dbReference type="PaxDb" id="44689-DDB0231759"/>
<dbReference type="EnsemblProtists" id="EAL69576">
    <property type="protein sequence ID" value="EAL69576"/>
    <property type="gene ID" value="DDB_G0275651"/>
</dbReference>
<dbReference type="GeneID" id="8620113"/>
<dbReference type="KEGG" id="ddi:DDB_G0275651"/>
<dbReference type="dictyBase" id="DDB_G0275651">
    <property type="gene designation" value="elp2"/>
</dbReference>
<dbReference type="VEuPathDB" id="AmoebaDB:DDB_G0275651"/>
<dbReference type="eggNOG" id="KOG1063">
    <property type="taxonomic scope" value="Eukaryota"/>
</dbReference>
<dbReference type="HOGENOM" id="CLU_006430_2_0_1"/>
<dbReference type="InParanoid" id="Q86H45"/>
<dbReference type="OMA" id="ENFRHIS"/>
<dbReference type="PhylomeDB" id="Q86H45"/>
<dbReference type="UniPathway" id="UPA00988"/>
<dbReference type="PRO" id="PR:Q86H45"/>
<dbReference type="Proteomes" id="UP000002195">
    <property type="component" value="Chromosome 2"/>
</dbReference>
<dbReference type="GO" id="GO:0005737">
    <property type="term" value="C:cytoplasm"/>
    <property type="evidence" value="ECO:0007669"/>
    <property type="project" value="UniProtKB-SubCell"/>
</dbReference>
<dbReference type="GO" id="GO:0033588">
    <property type="term" value="C:elongator holoenzyme complex"/>
    <property type="evidence" value="ECO:0007669"/>
    <property type="project" value="InterPro"/>
</dbReference>
<dbReference type="GO" id="GO:0005634">
    <property type="term" value="C:nucleus"/>
    <property type="evidence" value="ECO:0007669"/>
    <property type="project" value="UniProtKB-SubCell"/>
</dbReference>
<dbReference type="GO" id="GO:0006357">
    <property type="term" value="P:regulation of transcription by RNA polymerase II"/>
    <property type="evidence" value="ECO:0000250"/>
    <property type="project" value="dictyBase"/>
</dbReference>
<dbReference type="GO" id="GO:0002098">
    <property type="term" value="P:tRNA wobble uridine modification"/>
    <property type="evidence" value="ECO:0007669"/>
    <property type="project" value="InterPro"/>
</dbReference>
<dbReference type="Gene3D" id="2.130.10.10">
    <property type="entry name" value="YVTN repeat-like/Quinoprotein amine dehydrogenase"/>
    <property type="match status" value="6"/>
</dbReference>
<dbReference type="InterPro" id="IPR037289">
    <property type="entry name" value="Elp2"/>
</dbReference>
<dbReference type="InterPro" id="IPR015943">
    <property type="entry name" value="WD40/YVTN_repeat-like_dom_sf"/>
</dbReference>
<dbReference type="InterPro" id="IPR036322">
    <property type="entry name" value="WD40_repeat_dom_sf"/>
</dbReference>
<dbReference type="InterPro" id="IPR001680">
    <property type="entry name" value="WD40_rpt"/>
</dbReference>
<dbReference type="PANTHER" id="PTHR44111">
    <property type="entry name" value="ELONGATOR COMPLEX PROTEIN 2"/>
    <property type="match status" value="1"/>
</dbReference>
<dbReference type="PANTHER" id="PTHR44111:SF1">
    <property type="entry name" value="ELONGATOR COMPLEX PROTEIN 2"/>
    <property type="match status" value="1"/>
</dbReference>
<dbReference type="Pfam" id="PF00400">
    <property type="entry name" value="WD40"/>
    <property type="match status" value="9"/>
</dbReference>
<dbReference type="SMART" id="SM00320">
    <property type="entry name" value="WD40"/>
    <property type="match status" value="12"/>
</dbReference>
<dbReference type="SUPFAM" id="SSF50978">
    <property type="entry name" value="WD40 repeat-like"/>
    <property type="match status" value="3"/>
</dbReference>
<dbReference type="PROSITE" id="PS50082">
    <property type="entry name" value="WD_REPEATS_2"/>
    <property type="match status" value="4"/>
</dbReference>
<dbReference type="PROSITE" id="PS50294">
    <property type="entry name" value="WD_REPEATS_REGION"/>
    <property type="match status" value="3"/>
</dbReference>
<evidence type="ECO:0000250" key="1">
    <source>
        <dbReference type="UniProtKB" id="P42935"/>
    </source>
</evidence>
<evidence type="ECO:0000250" key="2">
    <source>
        <dbReference type="UniProtKB" id="Q6IA86"/>
    </source>
</evidence>
<evidence type="ECO:0000256" key="3">
    <source>
        <dbReference type="SAM" id="MobiDB-lite"/>
    </source>
</evidence>
<evidence type="ECO:0000305" key="4"/>
<reference key="1">
    <citation type="journal article" date="2002" name="Nature">
        <title>Sequence and analysis of chromosome 2 of Dictyostelium discoideum.</title>
        <authorList>
            <person name="Gloeckner G."/>
            <person name="Eichinger L."/>
            <person name="Szafranski K."/>
            <person name="Pachebat J.A."/>
            <person name="Bankier A.T."/>
            <person name="Dear P.H."/>
            <person name="Lehmann R."/>
            <person name="Baumgart C."/>
            <person name="Parra G."/>
            <person name="Abril J.F."/>
            <person name="Guigo R."/>
            <person name="Kumpf K."/>
            <person name="Tunggal B."/>
            <person name="Cox E.C."/>
            <person name="Quail M.A."/>
            <person name="Platzer M."/>
            <person name="Rosenthal A."/>
            <person name="Noegel A.A."/>
        </authorList>
    </citation>
    <scope>NUCLEOTIDE SEQUENCE [LARGE SCALE GENOMIC DNA]</scope>
    <source>
        <strain>AX4</strain>
    </source>
</reference>
<reference key="2">
    <citation type="journal article" date="2005" name="Nature">
        <title>The genome of the social amoeba Dictyostelium discoideum.</title>
        <authorList>
            <person name="Eichinger L."/>
            <person name="Pachebat J.A."/>
            <person name="Gloeckner G."/>
            <person name="Rajandream M.A."/>
            <person name="Sucgang R."/>
            <person name="Berriman M."/>
            <person name="Song J."/>
            <person name="Olsen R."/>
            <person name="Szafranski K."/>
            <person name="Xu Q."/>
            <person name="Tunggal B."/>
            <person name="Kummerfeld S."/>
            <person name="Madera M."/>
            <person name="Konfortov B.A."/>
            <person name="Rivero F."/>
            <person name="Bankier A.T."/>
            <person name="Lehmann R."/>
            <person name="Hamlin N."/>
            <person name="Davies R."/>
            <person name="Gaudet P."/>
            <person name="Fey P."/>
            <person name="Pilcher K."/>
            <person name="Chen G."/>
            <person name="Saunders D."/>
            <person name="Sodergren E.J."/>
            <person name="Davis P."/>
            <person name="Kerhornou A."/>
            <person name="Nie X."/>
            <person name="Hall N."/>
            <person name="Anjard C."/>
            <person name="Hemphill L."/>
            <person name="Bason N."/>
            <person name="Farbrother P."/>
            <person name="Desany B."/>
            <person name="Just E."/>
            <person name="Morio T."/>
            <person name="Rost R."/>
            <person name="Churcher C.M."/>
            <person name="Cooper J."/>
            <person name="Haydock S."/>
            <person name="van Driessche N."/>
            <person name="Cronin A."/>
            <person name="Goodhead I."/>
            <person name="Muzny D.M."/>
            <person name="Mourier T."/>
            <person name="Pain A."/>
            <person name="Lu M."/>
            <person name="Harper D."/>
            <person name="Lindsay R."/>
            <person name="Hauser H."/>
            <person name="James K.D."/>
            <person name="Quiles M."/>
            <person name="Madan Babu M."/>
            <person name="Saito T."/>
            <person name="Buchrieser C."/>
            <person name="Wardroper A."/>
            <person name="Felder M."/>
            <person name="Thangavelu M."/>
            <person name="Johnson D."/>
            <person name="Knights A."/>
            <person name="Loulseged H."/>
            <person name="Mungall K.L."/>
            <person name="Oliver K."/>
            <person name="Price C."/>
            <person name="Quail M.A."/>
            <person name="Urushihara H."/>
            <person name="Hernandez J."/>
            <person name="Rabbinowitsch E."/>
            <person name="Steffen D."/>
            <person name="Sanders M."/>
            <person name="Ma J."/>
            <person name="Kohara Y."/>
            <person name="Sharp S."/>
            <person name="Simmonds M.N."/>
            <person name="Spiegler S."/>
            <person name="Tivey A."/>
            <person name="Sugano S."/>
            <person name="White B."/>
            <person name="Walker D."/>
            <person name="Woodward J.R."/>
            <person name="Winckler T."/>
            <person name="Tanaka Y."/>
            <person name="Shaulsky G."/>
            <person name="Schleicher M."/>
            <person name="Weinstock G.M."/>
            <person name="Rosenthal A."/>
            <person name="Cox E.C."/>
            <person name="Chisholm R.L."/>
            <person name="Gibbs R.A."/>
            <person name="Loomis W.F."/>
            <person name="Platzer M."/>
            <person name="Kay R.R."/>
            <person name="Williams J.G."/>
            <person name="Dear P.H."/>
            <person name="Noegel A.A."/>
            <person name="Barrell B.G."/>
            <person name="Kuspa A."/>
        </authorList>
    </citation>
    <scope>NUCLEOTIDE SEQUENCE [LARGE SCALE GENOMIC DNA]</scope>
    <source>
        <strain>AX4</strain>
    </source>
</reference>
<comment type="function">
    <text evidence="2">Component of the elongator complex which is required for multiple tRNA modifications, including mcm5U (5-methoxycarbonylmethyl uridine), mcm5s2U (5-methoxycarbonylmethyl-2-thiouridine), and ncm5U (5-carbamoylmethyl uridine). The elongator complex catalyzes formation of carboxymethyluridine in the wobble base at position 34 in tRNAs.</text>
</comment>
<comment type="pathway">
    <text evidence="2">tRNA modification; 5-methoxycarbonylmethyl-2-thiouridine-tRNA biosynthesis.</text>
</comment>
<comment type="subunit">
    <text evidence="2">Component of the elongator complex.</text>
</comment>
<comment type="subcellular location">
    <subcellularLocation>
        <location evidence="2">Cytoplasm</location>
    </subcellularLocation>
    <subcellularLocation>
        <location evidence="2">Nucleus</location>
    </subcellularLocation>
</comment>
<comment type="domain">
    <text evidence="1">Folds into a two seven-bladed beta-propeller structure which is required for elongator complex assembly.</text>
</comment>
<comment type="similarity">
    <text evidence="4">Belongs to the WD repeat ELP2 family.</text>
</comment>
<comment type="caution">
    <text evidence="2">The elongator complex was originally thought to play a role in transcription elongation. However, it is no longer thought to play a direct role in this process and its primary function is thought to be in tRNA modification.</text>
</comment>
<feature type="chain" id="PRO_0000327784" description="Elongator complex protein 2">
    <location>
        <begin position="1"/>
        <end position="901"/>
    </location>
</feature>
<feature type="repeat" description="WD 1">
    <location>
        <begin position="11"/>
        <end position="50"/>
    </location>
</feature>
<feature type="repeat" description="WD 2">
    <location>
        <begin position="53"/>
        <end position="104"/>
    </location>
</feature>
<feature type="repeat" description="WD 3">
    <location>
        <begin position="113"/>
        <end position="155"/>
    </location>
</feature>
<feature type="repeat" description="WD 4">
    <location>
        <begin position="173"/>
        <end position="214"/>
    </location>
</feature>
<feature type="repeat" description="WD 5">
    <location>
        <begin position="225"/>
        <end position="274"/>
    </location>
</feature>
<feature type="repeat" description="WD 6">
    <location>
        <begin position="327"/>
        <end position="377"/>
    </location>
</feature>
<feature type="repeat" description="WD 7">
    <location>
        <begin position="387"/>
        <end position="426"/>
    </location>
</feature>
<feature type="repeat" description="WD 8">
    <location>
        <begin position="435"/>
        <end position="474"/>
    </location>
</feature>
<feature type="repeat" description="WD 9">
    <location>
        <begin position="495"/>
        <end position="535"/>
    </location>
</feature>
<feature type="repeat" description="WD 10">
    <location>
        <begin position="653"/>
        <end position="697"/>
    </location>
</feature>
<feature type="repeat" description="WD 11">
    <location>
        <begin position="700"/>
        <end position="739"/>
    </location>
</feature>
<feature type="repeat" description="WD 12">
    <location>
        <begin position="749"/>
        <end position="788"/>
    </location>
</feature>
<feature type="repeat" description="WD 13">
    <location>
        <begin position="796"/>
        <end position="844"/>
    </location>
</feature>
<feature type="repeat" description="WD 14">
    <location>
        <begin position="859"/>
        <end position="897"/>
    </location>
</feature>
<feature type="region of interest" description="Disordered" evidence="3">
    <location>
        <begin position="571"/>
        <end position="598"/>
    </location>
</feature>
<feature type="compositionally biased region" description="Low complexity" evidence="3">
    <location>
        <begin position="574"/>
        <end position="591"/>
    </location>
</feature>
<name>ELP2_DICDI</name>
<accession>Q86H45</accession>
<accession>Q552Y9</accession>